<accession>A7H409</accession>
<reference key="1">
    <citation type="submission" date="2007-07" db="EMBL/GenBank/DDBJ databases">
        <title>Complete genome sequence of Campylobacter jejuni subsp doylei 269.97 isolated from human blood.</title>
        <authorList>
            <person name="Fouts D.E."/>
            <person name="Mongodin E.F."/>
            <person name="Puiu D."/>
            <person name="Sebastian Y."/>
            <person name="Miller W.G."/>
            <person name="Mandrell R.E."/>
            <person name="Lastovica A.J."/>
            <person name="Nelson K.E."/>
        </authorList>
    </citation>
    <scope>NUCLEOTIDE SEQUENCE [LARGE SCALE GENOMIC DNA]</scope>
    <source>
        <strain>ATCC BAA-1458 / RM4099 / 269.97</strain>
    </source>
</reference>
<evidence type="ECO:0000255" key="1">
    <source>
        <dbReference type="HAMAP-Rule" id="MF_01382"/>
    </source>
</evidence>
<organism>
    <name type="scientific">Campylobacter jejuni subsp. doylei (strain ATCC BAA-1458 / RM4099 / 269.97)</name>
    <dbReference type="NCBI Taxonomy" id="360109"/>
    <lineage>
        <taxon>Bacteria</taxon>
        <taxon>Pseudomonadati</taxon>
        <taxon>Campylobacterota</taxon>
        <taxon>Epsilonproteobacteria</taxon>
        <taxon>Campylobacterales</taxon>
        <taxon>Campylobacteraceae</taxon>
        <taxon>Campylobacter</taxon>
    </lineage>
</organism>
<keyword id="KW-0067">ATP-binding</keyword>
<keyword id="KW-0997">Cell inner membrane</keyword>
<keyword id="KW-1003">Cell membrane</keyword>
<keyword id="KW-0963">Cytoplasm</keyword>
<keyword id="KW-0472">Membrane</keyword>
<keyword id="KW-0479">Metal-binding</keyword>
<keyword id="KW-0547">Nucleotide-binding</keyword>
<keyword id="KW-0653">Protein transport</keyword>
<keyword id="KW-1278">Translocase</keyword>
<keyword id="KW-0811">Translocation</keyword>
<keyword id="KW-0813">Transport</keyword>
<keyword id="KW-0862">Zinc</keyword>
<dbReference type="EC" id="7.4.2.8" evidence="1"/>
<dbReference type="EMBL" id="CP000768">
    <property type="protein sequence ID" value="ABS43708.1"/>
    <property type="molecule type" value="Genomic_DNA"/>
</dbReference>
<dbReference type="SMR" id="A7H409"/>
<dbReference type="KEGG" id="cjd:JJD26997_1165"/>
<dbReference type="HOGENOM" id="CLU_005314_3_0_7"/>
<dbReference type="Proteomes" id="UP000002302">
    <property type="component" value="Chromosome"/>
</dbReference>
<dbReference type="GO" id="GO:0031522">
    <property type="term" value="C:cell envelope Sec protein transport complex"/>
    <property type="evidence" value="ECO:0007669"/>
    <property type="project" value="TreeGrafter"/>
</dbReference>
<dbReference type="GO" id="GO:0005829">
    <property type="term" value="C:cytosol"/>
    <property type="evidence" value="ECO:0007669"/>
    <property type="project" value="TreeGrafter"/>
</dbReference>
<dbReference type="GO" id="GO:0005886">
    <property type="term" value="C:plasma membrane"/>
    <property type="evidence" value="ECO:0007669"/>
    <property type="project" value="UniProtKB-SubCell"/>
</dbReference>
<dbReference type="GO" id="GO:0005524">
    <property type="term" value="F:ATP binding"/>
    <property type="evidence" value="ECO:0007669"/>
    <property type="project" value="UniProtKB-UniRule"/>
</dbReference>
<dbReference type="GO" id="GO:0046872">
    <property type="term" value="F:metal ion binding"/>
    <property type="evidence" value="ECO:0007669"/>
    <property type="project" value="UniProtKB-KW"/>
</dbReference>
<dbReference type="GO" id="GO:0008564">
    <property type="term" value="F:protein-exporting ATPase activity"/>
    <property type="evidence" value="ECO:0007669"/>
    <property type="project" value="UniProtKB-EC"/>
</dbReference>
<dbReference type="GO" id="GO:0065002">
    <property type="term" value="P:intracellular protein transmembrane transport"/>
    <property type="evidence" value="ECO:0007669"/>
    <property type="project" value="UniProtKB-UniRule"/>
</dbReference>
<dbReference type="GO" id="GO:0017038">
    <property type="term" value="P:protein import"/>
    <property type="evidence" value="ECO:0007669"/>
    <property type="project" value="InterPro"/>
</dbReference>
<dbReference type="GO" id="GO:0006605">
    <property type="term" value="P:protein targeting"/>
    <property type="evidence" value="ECO:0007669"/>
    <property type="project" value="UniProtKB-UniRule"/>
</dbReference>
<dbReference type="GO" id="GO:0043952">
    <property type="term" value="P:protein transport by the Sec complex"/>
    <property type="evidence" value="ECO:0007669"/>
    <property type="project" value="TreeGrafter"/>
</dbReference>
<dbReference type="CDD" id="cd17928">
    <property type="entry name" value="DEXDc_SecA"/>
    <property type="match status" value="1"/>
</dbReference>
<dbReference type="CDD" id="cd18803">
    <property type="entry name" value="SF2_C_secA"/>
    <property type="match status" value="1"/>
</dbReference>
<dbReference type="FunFam" id="3.40.50.300:FF:000429">
    <property type="entry name" value="Preprotein translocase subunit SecA"/>
    <property type="match status" value="1"/>
</dbReference>
<dbReference type="FunFam" id="3.90.1440.10:FF:000001">
    <property type="entry name" value="Preprotein translocase subunit SecA"/>
    <property type="match status" value="1"/>
</dbReference>
<dbReference type="Gene3D" id="1.10.3060.10">
    <property type="entry name" value="Helical scaffold and wing domains of SecA"/>
    <property type="match status" value="1"/>
</dbReference>
<dbReference type="Gene3D" id="3.40.50.300">
    <property type="entry name" value="P-loop containing nucleotide triphosphate hydrolases"/>
    <property type="match status" value="3"/>
</dbReference>
<dbReference type="Gene3D" id="3.90.1440.10">
    <property type="entry name" value="SecA, preprotein cross-linking domain"/>
    <property type="match status" value="1"/>
</dbReference>
<dbReference type="HAMAP" id="MF_01382">
    <property type="entry name" value="SecA"/>
    <property type="match status" value="1"/>
</dbReference>
<dbReference type="InterPro" id="IPR014001">
    <property type="entry name" value="Helicase_ATP-bd"/>
</dbReference>
<dbReference type="InterPro" id="IPR001650">
    <property type="entry name" value="Helicase_C-like"/>
</dbReference>
<dbReference type="InterPro" id="IPR027417">
    <property type="entry name" value="P-loop_NTPase"/>
</dbReference>
<dbReference type="InterPro" id="IPR004027">
    <property type="entry name" value="SEC_C_motif"/>
</dbReference>
<dbReference type="InterPro" id="IPR000185">
    <property type="entry name" value="SecA"/>
</dbReference>
<dbReference type="InterPro" id="IPR011115">
    <property type="entry name" value="SecA_DEAD"/>
</dbReference>
<dbReference type="InterPro" id="IPR014018">
    <property type="entry name" value="SecA_motor_DEAD"/>
</dbReference>
<dbReference type="InterPro" id="IPR011130">
    <property type="entry name" value="SecA_preprotein_X-link_dom"/>
</dbReference>
<dbReference type="InterPro" id="IPR044722">
    <property type="entry name" value="SecA_SF2_C"/>
</dbReference>
<dbReference type="InterPro" id="IPR011116">
    <property type="entry name" value="SecA_Wing/Scaffold"/>
</dbReference>
<dbReference type="InterPro" id="IPR036266">
    <property type="entry name" value="SecA_Wing/Scaffold_sf"/>
</dbReference>
<dbReference type="InterPro" id="IPR036670">
    <property type="entry name" value="SecA_X-link_sf"/>
</dbReference>
<dbReference type="NCBIfam" id="NF006630">
    <property type="entry name" value="PRK09200.1"/>
    <property type="match status" value="1"/>
</dbReference>
<dbReference type="NCBIfam" id="NF009538">
    <property type="entry name" value="PRK12904.1"/>
    <property type="match status" value="1"/>
</dbReference>
<dbReference type="NCBIfam" id="TIGR00963">
    <property type="entry name" value="secA"/>
    <property type="match status" value="1"/>
</dbReference>
<dbReference type="PANTHER" id="PTHR30612:SF0">
    <property type="entry name" value="CHLOROPLAST PROTEIN-TRANSPORTING ATPASE"/>
    <property type="match status" value="1"/>
</dbReference>
<dbReference type="PANTHER" id="PTHR30612">
    <property type="entry name" value="SECA INNER MEMBRANE COMPONENT OF SEC PROTEIN SECRETION SYSTEM"/>
    <property type="match status" value="1"/>
</dbReference>
<dbReference type="Pfam" id="PF21090">
    <property type="entry name" value="P-loop_SecA"/>
    <property type="match status" value="1"/>
</dbReference>
<dbReference type="Pfam" id="PF02810">
    <property type="entry name" value="SEC-C"/>
    <property type="match status" value="1"/>
</dbReference>
<dbReference type="Pfam" id="PF07517">
    <property type="entry name" value="SecA_DEAD"/>
    <property type="match status" value="1"/>
</dbReference>
<dbReference type="Pfam" id="PF01043">
    <property type="entry name" value="SecA_PP_bind"/>
    <property type="match status" value="1"/>
</dbReference>
<dbReference type="Pfam" id="PF07516">
    <property type="entry name" value="SecA_SW"/>
    <property type="match status" value="1"/>
</dbReference>
<dbReference type="PRINTS" id="PR00906">
    <property type="entry name" value="SECA"/>
</dbReference>
<dbReference type="SMART" id="SM00957">
    <property type="entry name" value="SecA_DEAD"/>
    <property type="match status" value="1"/>
</dbReference>
<dbReference type="SMART" id="SM00958">
    <property type="entry name" value="SecA_PP_bind"/>
    <property type="match status" value="1"/>
</dbReference>
<dbReference type="SUPFAM" id="SSF81886">
    <property type="entry name" value="Helical scaffold and wing domains of SecA"/>
    <property type="match status" value="1"/>
</dbReference>
<dbReference type="SUPFAM" id="SSF52540">
    <property type="entry name" value="P-loop containing nucleoside triphosphate hydrolases"/>
    <property type="match status" value="2"/>
</dbReference>
<dbReference type="SUPFAM" id="SSF81767">
    <property type="entry name" value="Pre-protein crosslinking domain of SecA"/>
    <property type="match status" value="1"/>
</dbReference>
<dbReference type="PROSITE" id="PS51196">
    <property type="entry name" value="SECA_MOTOR_DEAD"/>
    <property type="match status" value="1"/>
</dbReference>
<sequence>MFLNTLKAVFGTKNDREVKKYFKRVVQINALEGKYQNLSDDELKAEFEKFKEQILSGEKNENDILNDVFAIVRETGKRTLNMRHFDVQLIGGMVLHDGKIAEMKTGEGKTLVATLPVVLNAMSGKGVHVVTVNDYLAKRDAEQMSAIYNFLGFSVGVVLSSQNSDIEHKQAYDCDITYGTNNEFGFDYLRDNMKFSKAEKVQREHNFVIVDEVDSILIDEARTPLIISGPTNRTLDGYIKANEVAKQMQKGEAVLPPEKPEGDFVVDEKNRSVLITEAGIAKAEKLFGVENLYSLENAILAHQLDQALKAHNLFEKDVHYVLRNKEVIIVDEFTGRLSEGRRFSEGLHQALEAKENVKIQEESQTLADITFQNYFRMYNKLAGMTGTAQTEATEFSQIYSLDVISIPTNIPIKRQDKDDLIYKTQNEKFKAVIEEIKKANAKGQPVLVGTASIERSEVFHNMLAKEKIPHHVLNAKNHEQEALIIQDAGKKGAVTIATNMAGRGVDIKIDDEIRALGGLYIIGTERHESRRIDNQLRGRAGRQGDPGISRFYLSLEDNLLRIFGGDRIKSIMDRLGIEEGESIESRIVTRAVENAQKKVESLHFESRKHLLEYDDVANEQRKTIYRYRNELLDENYDIRAKISQNIAEYSANVMNDYMLDESGSNVNFENLKAKILYECSTQISEKDFENLSVIEMQDKLSQILENSYNEKMSRLEIKELRNIERILYLQVLDNVWREHLYQMDILKTGIGLRGYNQKDPLVEYKKESYNLFLELVNRIKFDSIKLLFSVQFNQQEAQNLENKANEENEKLLQSSVEMGASEDNLGEAEFKKVPRNAPCPCGSGKKFKECHGKSGPKQGILA</sequence>
<comment type="function">
    <text evidence="1">Part of the Sec protein translocase complex. Interacts with the SecYEG preprotein conducting channel. Has a central role in coupling the hydrolysis of ATP to the transfer of proteins into and across the cell membrane, serving as an ATP-driven molecular motor driving the stepwise translocation of polypeptide chains across the membrane.</text>
</comment>
<comment type="catalytic activity">
    <reaction evidence="1">
        <text>ATP + H2O + cellular proteinSide 1 = ADP + phosphate + cellular proteinSide 2.</text>
        <dbReference type="EC" id="7.4.2.8"/>
    </reaction>
</comment>
<comment type="cofactor">
    <cofactor evidence="1">
        <name>Zn(2+)</name>
        <dbReference type="ChEBI" id="CHEBI:29105"/>
    </cofactor>
    <text evidence="1">May bind 1 zinc ion per subunit.</text>
</comment>
<comment type="subunit">
    <text evidence="1">Monomer and homodimer. Part of the essential Sec protein translocation apparatus which comprises SecA, SecYEG and auxiliary proteins SecDF-YajC and YidC.</text>
</comment>
<comment type="subcellular location">
    <subcellularLocation>
        <location evidence="1">Cell inner membrane</location>
        <topology evidence="1">Peripheral membrane protein</topology>
        <orientation evidence="1">Cytoplasmic side</orientation>
    </subcellularLocation>
    <subcellularLocation>
        <location evidence="1">Cytoplasm</location>
    </subcellularLocation>
    <text evidence="1">Distribution is 50-50.</text>
</comment>
<comment type="similarity">
    <text evidence="1">Belongs to the SecA family.</text>
</comment>
<proteinExistence type="inferred from homology"/>
<name>SECA_CAMJD</name>
<feature type="chain" id="PRO_0000320767" description="Protein translocase subunit SecA">
    <location>
        <begin position="1"/>
        <end position="862"/>
    </location>
</feature>
<feature type="binding site" evidence="1">
    <location>
        <position position="88"/>
    </location>
    <ligand>
        <name>ATP</name>
        <dbReference type="ChEBI" id="CHEBI:30616"/>
    </ligand>
</feature>
<feature type="binding site" evidence="1">
    <location>
        <begin position="106"/>
        <end position="110"/>
    </location>
    <ligand>
        <name>ATP</name>
        <dbReference type="ChEBI" id="CHEBI:30616"/>
    </ligand>
</feature>
<feature type="binding site" evidence="1">
    <location>
        <position position="506"/>
    </location>
    <ligand>
        <name>ATP</name>
        <dbReference type="ChEBI" id="CHEBI:30616"/>
    </ligand>
</feature>
<feature type="binding site" evidence="1">
    <location>
        <position position="839"/>
    </location>
    <ligand>
        <name>Zn(2+)</name>
        <dbReference type="ChEBI" id="CHEBI:29105"/>
    </ligand>
</feature>
<feature type="binding site" evidence="1">
    <location>
        <position position="841"/>
    </location>
    <ligand>
        <name>Zn(2+)</name>
        <dbReference type="ChEBI" id="CHEBI:29105"/>
    </ligand>
</feature>
<feature type="binding site" evidence="1">
    <location>
        <position position="850"/>
    </location>
    <ligand>
        <name>Zn(2+)</name>
        <dbReference type="ChEBI" id="CHEBI:29105"/>
    </ligand>
</feature>
<feature type="binding site" evidence="1">
    <location>
        <position position="851"/>
    </location>
    <ligand>
        <name>Zn(2+)</name>
        <dbReference type="ChEBI" id="CHEBI:29105"/>
    </ligand>
</feature>
<gene>
    <name evidence="1" type="primary">secA</name>
    <name type="ordered locus">JJD26997_1165</name>
</gene>
<protein>
    <recommendedName>
        <fullName evidence="1">Protein translocase subunit SecA</fullName>
        <ecNumber evidence="1">7.4.2.8</ecNumber>
    </recommendedName>
</protein>